<gene>
    <name evidence="1" type="primary">fni</name>
    <name type="ordered locus">SAOUHSC_02623</name>
</gene>
<accession>Q2FVR9</accession>
<reference key="1">
    <citation type="book" date="2006" name="Gram positive pathogens, 2nd edition">
        <title>The Staphylococcus aureus NCTC 8325 genome.</title>
        <editorList>
            <person name="Fischetti V."/>
            <person name="Novick R."/>
            <person name="Ferretti J."/>
            <person name="Portnoy D."/>
            <person name="Rood J."/>
        </editorList>
        <authorList>
            <person name="Gillaspy A.F."/>
            <person name="Worrell V."/>
            <person name="Orvis J."/>
            <person name="Roe B.A."/>
            <person name="Dyer D.W."/>
            <person name="Iandolo J.J."/>
        </authorList>
    </citation>
    <scope>NUCLEOTIDE SEQUENCE [LARGE SCALE GENOMIC DNA]</scope>
    <source>
        <strain>NCTC 8325 / PS 47</strain>
    </source>
</reference>
<protein>
    <recommendedName>
        <fullName evidence="1">Isopentenyl-diphosphate delta-isomerase</fullName>
        <shortName evidence="1">IPP isomerase</shortName>
        <ecNumber evidence="1">5.3.3.2</ecNumber>
    </recommendedName>
    <alternativeName>
        <fullName evidence="1">Isopentenyl diphosphate:dimethylallyl diphosphate isomerase</fullName>
    </alternativeName>
    <alternativeName>
        <fullName evidence="1">Isopentenyl pyrophosphate isomerase</fullName>
    </alternativeName>
    <alternativeName>
        <fullName evidence="1">Type 2 isopentenyl diphosphate isomerase</fullName>
        <shortName evidence="1">IDI-2</shortName>
    </alternativeName>
</protein>
<proteinExistence type="inferred from homology"/>
<keyword id="KW-0963">Cytoplasm</keyword>
<keyword id="KW-0285">Flavoprotein</keyword>
<keyword id="KW-0288">FMN</keyword>
<keyword id="KW-0413">Isomerase</keyword>
<keyword id="KW-0414">Isoprene biosynthesis</keyword>
<keyword id="KW-0460">Magnesium</keyword>
<keyword id="KW-0479">Metal-binding</keyword>
<keyword id="KW-0521">NADP</keyword>
<keyword id="KW-1185">Reference proteome</keyword>
<feature type="chain" id="PRO_1000048459" description="Isopentenyl-diphosphate delta-isomerase">
    <location>
        <begin position="1"/>
        <end position="349"/>
    </location>
</feature>
<feature type="binding site" evidence="1">
    <location>
        <begin position="9"/>
        <end position="10"/>
    </location>
    <ligand>
        <name>substrate</name>
    </ligand>
</feature>
<feature type="binding site" evidence="1">
    <location>
        <begin position="65"/>
        <end position="67"/>
    </location>
    <ligand>
        <name>FMN</name>
        <dbReference type="ChEBI" id="CHEBI:58210"/>
    </ligand>
</feature>
<feature type="binding site" evidence="1">
    <location>
        <begin position="95"/>
        <end position="97"/>
    </location>
    <ligand>
        <name>substrate</name>
    </ligand>
</feature>
<feature type="binding site" evidence="1">
    <location>
        <position position="95"/>
    </location>
    <ligand>
        <name>FMN</name>
        <dbReference type="ChEBI" id="CHEBI:58210"/>
    </ligand>
</feature>
<feature type="binding site" evidence="1">
    <location>
        <position position="124"/>
    </location>
    <ligand>
        <name>FMN</name>
        <dbReference type="ChEBI" id="CHEBI:58210"/>
    </ligand>
</feature>
<feature type="binding site" evidence="1">
    <location>
        <position position="154"/>
    </location>
    <ligand>
        <name>substrate</name>
    </ligand>
</feature>
<feature type="binding site" evidence="1">
    <location>
        <position position="155"/>
    </location>
    <ligand>
        <name>Mg(2+)</name>
        <dbReference type="ChEBI" id="CHEBI:18420"/>
    </ligand>
</feature>
<feature type="binding site" evidence="1">
    <location>
        <position position="186"/>
    </location>
    <ligand>
        <name>FMN</name>
        <dbReference type="ChEBI" id="CHEBI:58210"/>
    </ligand>
</feature>
<feature type="binding site" evidence="1">
    <location>
        <position position="211"/>
    </location>
    <ligand>
        <name>FMN</name>
        <dbReference type="ChEBI" id="CHEBI:58210"/>
    </ligand>
</feature>
<feature type="binding site" evidence="1">
    <location>
        <position position="216"/>
    </location>
    <ligand>
        <name>FMN</name>
        <dbReference type="ChEBI" id="CHEBI:58210"/>
    </ligand>
</feature>
<feature type="binding site" evidence="1">
    <location>
        <begin position="262"/>
        <end position="264"/>
    </location>
    <ligand>
        <name>FMN</name>
        <dbReference type="ChEBI" id="CHEBI:58210"/>
    </ligand>
</feature>
<feature type="binding site" evidence="1">
    <location>
        <begin position="283"/>
        <end position="284"/>
    </location>
    <ligand>
        <name>FMN</name>
        <dbReference type="ChEBI" id="CHEBI:58210"/>
    </ligand>
</feature>
<comment type="function">
    <text evidence="1">Involved in the biosynthesis of isoprenoids. Catalyzes the 1,3-allylic rearrangement of the homoallylic substrate isopentenyl (IPP) to its allylic isomer, dimethylallyl diphosphate (DMAPP).</text>
</comment>
<comment type="catalytic activity">
    <reaction evidence="1">
        <text>isopentenyl diphosphate = dimethylallyl diphosphate</text>
        <dbReference type="Rhea" id="RHEA:23284"/>
        <dbReference type="ChEBI" id="CHEBI:57623"/>
        <dbReference type="ChEBI" id="CHEBI:128769"/>
        <dbReference type="EC" id="5.3.3.2"/>
    </reaction>
</comment>
<comment type="cofactor">
    <cofactor evidence="1">
        <name>FMN</name>
        <dbReference type="ChEBI" id="CHEBI:58210"/>
    </cofactor>
</comment>
<comment type="cofactor">
    <cofactor evidence="1">
        <name>NADPH</name>
        <dbReference type="ChEBI" id="CHEBI:57783"/>
    </cofactor>
</comment>
<comment type="cofactor">
    <cofactor evidence="1">
        <name>Mg(2+)</name>
        <dbReference type="ChEBI" id="CHEBI:18420"/>
    </cofactor>
</comment>
<comment type="subunit">
    <text evidence="1">Homooctamer. Dimer of tetramers.</text>
</comment>
<comment type="subcellular location">
    <subcellularLocation>
        <location evidence="1">Cytoplasm</location>
    </subcellularLocation>
</comment>
<comment type="similarity">
    <text evidence="1">Belongs to the IPP isomerase type 2 family.</text>
</comment>
<dbReference type="EC" id="5.3.3.2" evidence="1"/>
<dbReference type="EMBL" id="CP000253">
    <property type="protein sequence ID" value="ABD31632.1"/>
    <property type="molecule type" value="Genomic_DNA"/>
</dbReference>
<dbReference type="RefSeq" id="WP_001279381.1">
    <property type="nucleotide sequence ID" value="NZ_LS483365.1"/>
</dbReference>
<dbReference type="RefSeq" id="YP_501084.1">
    <property type="nucleotide sequence ID" value="NC_007795.1"/>
</dbReference>
<dbReference type="SMR" id="Q2FVR9"/>
<dbReference type="STRING" id="93061.SAOUHSC_02623"/>
<dbReference type="PaxDb" id="1280-SAXN108_2596"/>
<dbReference type="GeneID" id="3921400"/>
<dbReference type="KEGG" id="sao:SAOUHSC_02623"/>
<dbReference type="PATRIC" id="fig|93061.5.peg.2372"/>
<dbReference type="eggNOG" id="COG1304">
    <property type="taxonomic scope" value="Bacteria"/>
</dbReference>
<dbReference type="HOGENOM" id="CLU_065515_0_0_9"/>
<dbReference type="OrthoDB" id="9795032at2"/>
<dbReference type="Proteomes" id="UP000008816">
    <property type="component" value="Chromosome"/>
</dbReference>
<dbReference type="GO" id="GO:0005737">
    <property type="term" value="C:cytoplasm"/>
    <property type="evidence" value="ECO:0007669"/>
    <property type="project" value="UniProtKB-SubCell"/>
</dbReference>
<dbReference type="GO" id="GO:0010181">
    <property type="term" value="F:FMN binding"/>
    <property type="evidence" value="ECO:0007669"/>
    <property type="project" value="UniProtKB-UniRule"/>
</dbReference>
<dbReference type="GO" id="GO:0004452">
    <property type="term" value="F:isopentenyl-diphosphate delta-isomerase activity"/>
    <property type="evidence" value="ECO:0007669"/>
    <property type="project" value="UniProtKB-UniRule"/>
</dbReference>
<dbReference type="GO" id="GO:0000287">
    <property type="term" value="F:magnesium ion binding"/>
    <property type="evidence" value="ECO:0007669"/>
    <property type="project" value="UniProtKB-UniRule"/>
</dbReference>
<dbReference type="GO" id="GO:0070402">
    <property type="term" value="F:NADPH binding"/>
    <property type="evidence" value="ECO:0007669"/>
    <property type="project" value="UniProtKB-UniRule"/>
</dbReference>
<dbReference type="GO" id="GO:0016491">
    <property type="term" value="F:oxidoreductase activity"/>
    <property type="evidence" value="ECO:0007669"/>
    <property type="project" value="InterPro"/>
</dbReference>
<dbReference type="GO" id="GO:0008299">
    <property type="term" value="P:isoprenoid biosynthetic process"/>
    <property type="evidence" value="ECO:0007669"/>
    <property type="project" value="UniProtKB-UniRule"/>
</dbReference>
<dbReference type="CDD" id="cd02811">
    <property type="entry name" value="IDI-2_FMN"/>
    <property type="match status" value="1"/>
</dbReference>
<dbReference type="Gene3D" id="3.20.20.70">
    <property type="entry name" value="Aldolase class I"/>
    <property type="match status" value="1"/>
</dbReference>
<dbReference type="HAMAP" id="MF_00354">
    <property type="entry name" value="Idi_2"/>
    <property type="match status" value="1"/>
</dbReference>
<dbReference type="InterPro" id="IPR013785">
    <property type="entry name" value="Aldolase_TIM"/>
</dbReference>
<dbReference type="InterPro" id="IPR000262">
    <property type="entry name" value="FMN-dep_DH"/>
</dbReference>
<dbReference type="InterPro" id="IPR011179">
    <property type="entry name" value="IPdP_isomerase"/>
</dbReference>
<dbReference type="NCBIfam" id="TIGR02151">
    <property type="entry name" value="IPP_isom_2"/>
    <property type="match status" value="1"/>
</dbReference>
<dbReference type="PANTHER" id="PTHR43665">
    <property type="entry name" value="ISOPENTENYL-DIPHOSPHATE DELTA-ISOMERASE"/>
    <property type="match status" value="1"/>
</dbReference>
<dbReference type="PANTHER" id="PTHR43665:SF1">
    <property type="entry name" value="ISOPENTENYL-DIPHOSPHATE DELTA-ISOMERASE"/>
    <property type="match status" value="1"/>
</dbReference>
<dbReference type="Pfam" id="PF01070">
    <property type="entry name" value="FMN_dh"/>
    <property type="match status" value="1"/>
</dbReference>
<dbReference type="PIRSF" id="PIRSF003314">
    <property type="entry name" value="IPP_isomerase"/>
    <property type="match status" value="1"/>
</dbReference>
<dbReference type="SUPFAM" id="SSF51395">
    <property type="entry name" value="FMN-linked oxidoreductases"/>
    <property type="match status" value="1"/>
</dbReference>
<sequence>MSDFQREQRKNEHVEIAMAQSDAMHSDFDKMRFVHHSIPSINVNDIDLTSQTPDLTMAYPVYINAMTGGSEWTKNINEKLAVVARETGLAMAVGSTHAALRNPRMAETFTIARKMNPEGMIFSNVGADVPVEKALEAVELLEAQALQIHVNSPQELVMPEGNREFVTWLDNIASIVSRVSVPVIIKEVGFGMSKELMHDLQQIGVKYVDVSGKGGTNFVDIENERRANKDMDYLSSWGQSTVESLLETTAYQSEISVFASGGLRTPLDAIKSLALGAKATGMSRPFLNQVENNGIAHTVAYVESFIEHMKSIMTMLDAKNIDDLTQKQIVFSPEILSWIEQRNLNIHRG</sequence>
<organism>
    <name type="scientific">Staphylococcus aureus (strain NCTC 8325 / PS 47)</name>
    <dbReference type="NCBI Taxonomy" id="93061"/>
    <lineage>
        <taxon>Bacteria</taxon>
        <taxon>Bacillati</taxon>
        <taxon>Bacillota</taxon>
        <taxon>Bacilli</taxon>
        <taxon>Bacillales</taxon>
        <taxon>Staphylococcaceae</taxon>
        <taxon>Staphylococcus</taxon>
    </lineage>
</organism>
<name>IDI2_STAA8</name>
<evidence type="ECO:0000255" key="1">
    <source>
        <dbReference type="HAMAP-Rule" id="MF_00354"/>
    </source>
</evidence>